<gene>
    <name evidence="1" type="primary">pyrH</name>
    <name type="ordered locus">Shewmr7_2706</name>
</gene>
<accession>Q0HT64</accession>
<protein>
    <recommendedName>
        <fullName evidence="1">Uridylate kinase</fullName>
        <shortName evidence="1">UK</shortName>
        <ecNumber evidence="1">2.7.4.22</ecNumber>
    </recommendedName>
    <alternativeName>
        <fullName evidence="1">Uridine monophosphate kinase</fullName>
        <shortName evidence="1">UMP kinase</shortName>
        <shortName evidence="1">UMPK</shortName>
    </alternativeName>
</protein>
<evidence type="ECO:0000255" key="1">
    <source>
        <dbReference type="HAMAP-Rule" id="MF_01220"/>
    </source>
</evidence>
<feature type="chain" id="PRO_1000054014" description="Uridylate kinase">
    <location>
        <begin position="1"/>
        <end position="242"/>
    </location>
</feature>
<feature type="region of interest" description="Involved in allosteric activation by GTP" evidence="1">
    <location>
        <begin position="23"/>
        <end position="28"/>
    </location>
</feature>
<feature type="binding site" evidence="1">
    <location>
        <begin position="15"/>
        <end position="18"/>
    </location>
    <ligand>
        <name>ATP</name>
        <dbReference type="ChEBI" id="CHEBI:30616"/>
    </ligand>
</feature>
<feature type="binding site" evidence="1">
    <location>
        <position position="57"/>
    </location>
    <ligand>
        <name>UMP</name>
        <dbReference type="ChEBI" id="CHEBI:57865"/>
    </ligand>
</feature>
<feature type="binding site" evidence="1">
    <location>
        <position position="58"/>
    </location>
    <ligand>
        <name>ATP</name>
        <dbReference type="ChEBI" id="CHEBI:30616"/>
    </ligand>
</feature>
<feature type="binding site" evidence="1">
    <location>
        <position position="62"/>
    </location>
    <ligand>
        <name>ATP</name>
        <dbReference type="ChEBI" id="CHEBI:30616"/>
    </ligand>
</feature>
<feature type="binding site" evidence="1">
    <location>
        <position position="77"/>
    </location>
    <ligand>
        <name>UMP</name>
        <dbReference type="ChEBI" id="CHEBI:57865"/>
    </ligand>
</feature>
<feature type="binding site" evidence="1">
    <location>
        <begin position="138"/>
        <end position="145"/>
    </location>
    <ligand>
        <name>UMP</name>
        <dbReference type="ChEBI" id="CHEBI:57865"/>
    </ligand>
</feature>
<feature type="binding site" evidence="1">
    <location>
        <position position="165"/>
    </location>
    <ligand>
        <name>ATP</name>
        <dbReference type="ChEBI" id="CHEBI:30616"/>
    </ligand>
</feature>
<feature type="binding site" evidence="1">
    <location>
        <position position="171"/>
    </location>
    <ligand>
        <name>ATP</name>
        <dbReference type="ChEBI" id="CHEBI:30616"/>
    </ligand>
</feature>
<feature type="binding site" evidence="1">
    <location>
        <position position="174"/>
    </location>
    <ligand>
        <name>ATP</name>
        <dbReference type="ChEBI" id="CHEBI:30616"/>
    </ligand>
</feature>
<reference key="1">
    <citation type="submission" date="2006-08" db="EMBL/GenBank/DDBJ databases">
        <title>Complete sequence of chromosome 1 of Shewanella sp. MR-7.</title>
        <authorList>
            <person name="Copeland A."/>
            <person name="Lucas S."/>
            <person name="Lapidus A."/>
            <person name="Barry K."/>
            <person name="Detter J.C."/>
            <person name="Glavina del Rio T."/>
            <person name="Hammon N."/>
            <person name="Israni S."/>
            <person name="Dalin E."/>
            <person name="Tice H."/>
            <person name="Pitluck S."/>
            <person name="Kiss H."/>
            <person name="Brettin T."/>
            <person name="Bruce D."/>
            <person name="Han C."/>
            <person name="Tapia R."/>
            <person name="Gilna P."/>
            <person name="Schmutz J."/>
            <person name="Larimer F."/>
            <person name="Land M."/>
            <person name="Hauser L."/>
            <person name="Kyrpides N."/>
            <person name="Mikhailova N."/>
            <person name="Nealson K."/>
            <person name="Konstantinidis K."/>
            <person name="Klappenbach J."/>
            <person name="Tiedje J."/>
            <person name="Richardson P."/>
        </authorList>
    </citation>
    <scope>NUCLEOTIDE SEQUENCE [LARGE SCALE GENOMIC DNA]</scope>
    <source>
        <strain>MR-7</strain>
    </source>
</reference>
<keyword id="KW-0021">Allosteric enzyme</keyword>
<keyword id="KW-0067">ATP-binding</keyword>
<keyword id="KW-0963">Cytoplasm</keyword>
<keyword id="KW-0418">Kinase</keyword>
<keyword id="KW-0547">Nucleotide-binding</keyword>
<keyword id="KW-0665">Pyrimidine biosynthesis</keyword>
<keyword id="KW-0808">Transferase</keyword>
<dbReference type="EC" id="2.7.4.22" evidence="1"/>
<dbReference type="EMBL" id="CP000444">
    <property type="protein sequence ID" value="ABI43691.1"/>
    <property type="molecule type" value="Genomic_DNA"/>
</dbReference>
<dbReference type="SMR" id="Q0HT64"/>
<dbReference type="KEGG" id="shm:Shewmr7_2706"/>
<dbReference type="HOGENOM" id="CLU_033861_0_0_6"/>
<dbReference type="UniPathway" id="UPA00159">
    <property type="reaction ID" value="UER00275"/>
</dbReference>
<dbReference type="GO" id="GO:0005829">
    <property type="term" value="C:cytosol"/>
    <property type="evidence" value="ECO:0007669"/>
    <property type="project" value="TreeGrafter"/>
</dbReference>
<dbReference type="GO" id="GO:0005524">
    <property type="term" value="F:ATP binding"/>
    <property type="evidence" value="ECO:0007669"/>
    <property type="project" value="UniProtKB-KW"/>
</dbReference>
<dbReference type="GO" id="GO:0033862">
    <property type="term" value="F:UMP kinase activity"/>
    <property type="evidence" value="ECO:0007669"/>
    <property type="project" value="UniProtKB-EC"/>
</dbReference>
<dbReference type="GO" id="GO:0044210">
    <property type="term" value="P:'de novo' CTP biosynthetic process"/>
    <property type="evidence" value="ECO:0007669"/>
    <property type="project" value="UniProtKB-UniRule"/>
</dbReference>
<dbReference type="GO" id="GO:0006225">
    <property type="term" value="P:UDP biosynthetic process"/>
    <property type="evidence" value="ECO:0007669"/>
    <property type="project" value="TreeGrafter"/>
</dbReference>
<dbReference type="CDD" id="cd04254">
    <property type="entry name" value="AAK_UMPK-PyrH-Ec"/>
    <property type="match status" value="1"/>
</dbReference>
<dbReference type="FunFam" id="3.40.1160.10:FF:000001">
    <property type="entry name" value="Uridylate kinase"/>
    <property type="match status" value="1"/>
</dbReference>
<dbReference type="Gene3D" id="3.40.1160.10">
    <property type="entry name" value="Acetylglutamate kinase-like"/>
    <property type="match status" value="1"/>
</dbReference>
<dbReference type="HAMAP" id="MF_01220_B">
    <property type="entry name" value="PyrH_B"/>
    <property type="match status" value="1"/>
</dbReference>
<dbReference type="InterPro" id="IPR036393">
    <property type="entry name" value="AceGlu_kinase-like_sf"/>
</dbReference>
<dbReference type="InterPro" id="IPR001048">
    <property type="entry name" value="Asp/Glu/Uridylate_kinase"/>
</dbReference>
<dbReference type="InterPro" id="IPR011817">
    <property type="entry name" value="Uridylate_kinase"/>
</dbReference>
<dbReference type="InterPro" id="IPR015963">
    <property type="entry name" value="Uridylate_kinase_bac"/>
</dbReference>
<dbReference type="NCBIfam" id="TIGR02075">
    <property type="entry name" value="pyrH_bact"/>
    <property type="match status" value="1"/>
</dbReference>
<dbReference type="PANTHER" id="PTHR42833">
    <property type="entry name" value="URIDYLATE KINASE"/>
    <property type="match status" value="1"/>
</dbReference>
<dbReference type="PANTHER" id="PTHR42833:SF4">
    <property type="entry name" value="URIDYLATE KINASE PUMPKIN, CHLOROPLASTIC"/>
    <property type="match status" value="1"/>
</dbReference>
<dbReference type="Pfam" id="PF00696">
    <property type="entry name" value="AA_kinase"/>
    <property type="match status" value="1"/>
</dbReference>
<dbReference type="PIRSF" id="PIRSF005650">
    <property type="entry name" value="Uridylate_kin"/>
    <property type="match status" value="1"/>
</dbReference>
<dbReference type="SUPFAM" id="SSF53633">
    <property type="entry name" value="Carbamate kinase-like"/>
    <property type="match status" value="1"/>
</dbReference>
<name>PYRH_SHESR</name>
<organism>
    <name type="scientific">Shewanella sp. (strain MR-7)</name>
    <dbReference type="NCBI Taxonomy" id="60481"/>
    <lineage>
        <taxon>Bacteria</taxon>
        <taxon>Pseudomonadati</taxon>
        <taxon>Pseudomonadota</taxon>
        <taxon>Gammaproteobacteria</taxon>
        <taxon>Alteromonadales</taxon>
        <taxon>Shewanellaceae</taxon>
        <taxon>Shewanella</taxon>
    </lineage>
</organism>
<comment type="function">
    <text evidence="1">Catalyzes the reversible phosphorylation of UMP to UDP.</text>
</comment>
<comment type="catalytic activity">
    <reaction evidence="1">
        <text>UMP + ATP = UDP + ADP</text>
        <dbReference type="Rhea" id="RHEA:24400"/>
        <dbReference type="ChEBI" id="CHEBI:30616"/>
        <dbReference type="ChEBI" id="CHEBI:57865"/>
        <dbReference type="ChEBI" id="CHEBI:58223"/>
        <dbReference type="ChEBI" id="CHEBI:456216"/>
        <dbReference type="EC" id="2.7.4.22"/>
    </reaction>
</comment>
<comment type="activity regulation">
    <text evidence="1">Allosterically activated by GTP. Inhibited by UTP.</text>
</comment>
<comment type="pathway">
    <text evidence="1">Pyrimidine metabolism; CTP biosynthesis via de novo pathway; UDP from UMP (UMPK route): step 1/1.</text>
</comment>
<comment type="subunit">
    <text evidence="1">Homohexamer.</text>
</comment>
<comment type="subcellular location">
    <subcellularLocation>
        <location evidence="1">Cytoplasm</location>
    </subcellularLocation>
</comment>
<comment type="similarity">
    <text evidence="1">Belongs to the UMP kinase family.</text>
</comment>
<proteinExistence type="inferred from homology"/>
<sequence>MSTNPKPAFRRILLKLSGEALMGDEGFGIDPKVLDRMAQEVKELVELGIQVGVVIGGGNLFRGEGLAKAGMNRVVGDHMGMLATVMNGLAMRDALHRAYVNARLMSAIPLKGVCDDYNWAEAISLLKSGRVVIFAAGTGNPFCTTDSAACLRGIEIEAEVVLKGTKVDGVYSDDPMKNPEAVKYDELSYTEVLDKELKVMDLAAFTMARDHDMPILVFNMNKPGALRRVVMGEEEGTMIRAK</sequence>